<accession>O64214</accession>
<organism>
    <name type="scientific">Mycobacterium phage D29</name>
    <name type="common">Mycobacteriophage D29</name>
    <dbReference type="NCBI Taxonomy" id="28369"/>
    <lineage>
        <taxon>Viruses</taxon>
        <taxon>Duplodnaviria</taxon>
        <taxon>Heunggongvirae</taxon>
        <taxon>Uroviricota</taxon>
        <taxon>Caudoviricetes</taxon>
        <taxon>Fromanvirus</taxon>
    </lineage>
</organism>
<proteinExistence type="predicted"/>
<protein>
    <recommendedName>
        <fullName>Gene 20 protein</fullName>
    </recommendedName>
    <alternativeName>
        <fullName>Gp20</fullName>
    </alternativeName>
</protein>
<feature type="chain" id="PRO_0000164728" description="Gene 20 protein">
    <location>
        <begin position="1"/>
        <end position="122"/>
    </location>
</feature>
<keyword id="KW-1185">Reference proteome</keyword>
<gene>
    <name type="primary">20</name>
</gene>
<reference key="1">
    <citation type="journal article" date="1998" name="J. Mol. Biol.">
        <title>Genome structure of mycobacteriophage D29: implications for phage evolution.</title>
        <authorList>
            <person name="Ford M.E."/>
            <person name="Sarkis G.J."/>
            <person name="Belanger A.E."/>
            <person name="Hendrix R.W."/>
            <person name="Hatfull G.F."/>
        </authorList>
    </citation>
    <scope>NUCLEOTIDE SEQUENCE [LARGE SCALE GENOMIC DNA]</scope>
</reference>
<sequence length="122" mass="13788">MSLLDTGARYQPVLVYPEELVIDADGNKKTQPSKTPIQAIARFQVANQSGTSARRAEQDNGGFTTEKVYRMRFPRSFTKEHGILGAQTQIEWKGQRWALFGDATEYDSSPALARVDYTIKRF</sequence>
<dbReference type="EMBL" id="AF022214">
    <property type="protein sequence ID" value="AAC18461.1"/>
    <property type="molecule type" value="Genomic_DNA"/>
</dbReference>
<dbReference type="PIR" id="B72802">
    <property type="entry name" value="B72802"/>
</dbReference>
<dbReference type="RefSeq" id="NP_046836.1">
    <property type="nucleotide sequence ID" value="NC_001900.1"/>
</dbReference>
<dbReference type="SMR" id="O64214"/>
<dbReference type="GeneID" id="1261606"/>
<dbReference type="KEGG" id="vg:1261606"/>
<dbReference type="OrthoDB" id="13366at10239"/>
<dbReference type="Proteomes" id="UP000002131">
    <property type="component" value="Segment"/>
</dbReference>
<organismHost>
    <name type="scientific">Mycobacterium</name>
    <dbReference type="NCBI Taxonomy" id="1763"/>
</organismHost>
<name>VG20_BPMD2</name>